<dbReference type="EC" id="2.7.11.33" evidence="1"/>
<dbReference type="EC" id="2.7.4.28" evidence="1"/>
<dbReference type="EMBL" id="AE003849">
    <property type="protein sequence ID" value="AAF84069.1"/>
    <property type="status" value="ALT_INIT"/>
    <property type="molecule type" value="Genomic_DNA"/>
</dbReference>
<dbReference type="PIR" id="B82703">
    <property type="entry name" value="B82703"/>
</dbReference>
<dbReference type="RefSeq" id="WP_031337943.1">
    <property type="nucleotide sequence ID" value="NC_002488.3"/>
</dbReference>
<dbReference type="SMR" id="Q9PDW9"/>
<dbReference type="STRING" id="160492.XF_1260"/>
<dbReference type="KEGG" id="xfa:XF_1260"/>
<dbReference type="eggNOG" id="COG1806">
    <property type="taxonomic scope" value="Bacteria"/>
</dbReference>
<dbReference type="HOGENOM" id="CLU_046206_1_0_6"/>
<dbReference type="Proteomes" id="UP000000812">
    <property type="component" value="Chromosome"/>
</dbReference>
<dbReference type="GO" id="GO:0043531">
    <property type="term" value="F:ADP binding"/>
    <property type="evidence" value="ECO:0007669"/>
    <property type="project" value="UniProtKB-UniRule"/>
</dbReference>
<dbReference type="GO" id="GO:0005524">
    <property type="term" value="F:ATP binding"/>
    <property type="evidence" value="ECO:0007669"/>
    <property type="project" value="InterPro"/>
</dbReference>
<dbReference type="GO" id="GO:0016776">
    <property type="term" value="F:phosphotransferase activity, phosphate group as acceptor"/>
    <property type="evidence" value="ECO:0007669"/>
    <property type="project" value="UniProtKB-UniRule"/>
</dbReference>
<dbReference type="GO" id="GO:0004674">
    <property type="term" value="F:protein serine/threonine kinase activity"/>
    <property type="evidence" value="ECO:0007669"/>
    <property type="project" value="UniProtKB-UniRule"/>
</dbReference>
<dbReference type="HAMAP" id="MF_01062">
    <property type="entry name" value="PSRP"/>
    <property type="match status" value="1"/>
</dbReference>
<dbReference type="InterPro" id="IPR005177">
    <property type="entry name" value="Kinase-pyrophosphorylase"/>
</dbReference>
<dbReference type="InterPro" id="IPR026530">
    <property type="entry name" value="PSRP"/>
</dbReference>
<dbReference type="NCBIfam" id="NF003742">
    <property type="entry name" value="PRK05339.1"/>
    <property type="match status" value="1"/>
</dbReference>
<dbReference type="PANTHER" id="PTHR31756">
    <property type="entry name" value="PYRUVATE, PHOSPHATE DIKINASE REGULATORY PROTEIN 1, CHLOROPLASTIC"/>
    <property type="match status" value="1"/>
</dbReference>
<dbReference type="PANTHER" id="PTHR31756:SF3">
    <property type="entry name" value="PYRUVATE, PHOSPHATE DIKINASE REGULATORY PROTEIN 1, CHLOROPLASTIC"/>
    <property type="match status" value="1"/>
</dbReference>
<dbReference type="Pfam" id="PF03618">
    <property type="entry name" value="Kinase-PPPase"/>
    <property type="match status" value="1"/>
</dbReference>
<organism>
    <name type="scientific">Xylella fastidiosa (strain 9a5c)</name>
    <dbReference type="NCBI Taxonomy" id="160492"/>
    <lineage>
        <taxon>Bacteria</taxon>
        <taxon>Pseudomonadati</taxon>
        <taxon>Pseudomonadota</taxon>
        <taxon>Gammaproteobacteria</taxon>
        <taxon>Lysobacterales</taxon>
        <taxon>Lysobacteraceae</taxon>
        <taxon>Xylella</taxon>
    </lineage>
</organism>
<gene>
    <name type="ordered locus">XF_1260</name>
</gene>
<sequence>MSTIRPVFYVSDGTGITAETIGHSLLTQFSGFTFVTERMVFIDDAEKARDASQRILAASQRYRVRPIVVNSCVNPYLSVILAESGALMLDVFAPFIGLLEHELNTSRHSRIGRAHGMVDFETYHRRINAMNFALAHDDGVAASYDEAEVILVAVSRAGKTPTCIYLALHYGIRAANYPLIDEDLNSDQLPLRLRPYRKKLFGLTINPERLQQIRQERRPNSRYAALDTCKREVAAAERMFSAERITTLSTTHTSIEEISSKVLVTLGLQREMF</sequence>
<name>PSRP_XYLFA</name>
<reference key="1">
    <citation type="journal article" date="2000" name="Nature">
        <title>The genome sequence of the plant pathogen Xylella fastidiosa.</title>
        <authorList>
            <person name="Simpson A.J.G."/>
            <person name="Reinach F.C."/>
            <person name="Arruda P."/>
            <person name="Abreu F.A."/>
            <person name="Acencio M."/>
            <person name="Alvarenga R."/>
            <person name="Alves L.M.C."/>
            <person name="Araya J.E."/>
            <person name="Baia G.S."/>
            <person name="Baptista C.S."/>
            <person name="Barros M.H."/>
            <person name="Bonaccorsi E.D."/>
            <person name="Bordin S."/>
            <person name="Bove J.M."/>
            <person name="Briones M.R.S."/>
            <person name="Bueno M.R.P."/>
            <person name="Camargo A.A."/>
            <person name="Camargo L.E.A."/>
            <person name="Carraro D.M."/>
            <person name="Carrer H."/>
            <person name="Colauto N.B."/>
            <person name="Colombo C."/>
            <person name="Costa F.F."/>
            <person name="Costa M.C.R."/>
            <person name="Costa-Neto C.M."/>
            <person name="Coutinho L.L."/>
            <person name="Cristofani M."/>
            <person name="Dias-Neto E."/>
            <person name="Docena C."/>
            <person name="El-Dorry H."/>
            <person name="Facincani A.P."/>
            <person name="Ferreira A.J.S."/>
            <person name="Ferreira V.C.A."/>
            <person name="Ferro J.A."/>
            <person name="Fraga J.S."/>
            <person name="Franca S.C."/>
            <person name="Franco M.C."/>
            <person name="Frohme M."/>
            <person name="Furlan L.R."/>
            <person name="Garnier M."/>
            <person name="Goldman G.H."/>
            <person name="Goldman M.H.S."/>
            <person name="Gomes S.L."/>
            <person name="Gruber A."/>
            <person name="Ho P.L."/>
            <person name="Hoheisel J.D."/>
            <person name="Junqueira M.L."/>
            <person name="Kemper E.L."/>
            <person name="Kitajima J.P."/>
            <person name="Krieger J.E."/>
            <person name="Kuramae E.E."/>
            <person name="Laigret F."/>
            <person name="Lambais M.R."/>
            <person name="Leite L.C.C."/>
            <person name="Lemos E.G.M."/>
            <person name="Lemos M.V.F."/>
            <person name="Lopes S.A."/>
            <person name="Lopes C.R."/>
            <person name="Machado J.A."/>
            <person name="Machado M.A."/>
            <person name="Madeira A.M.B.N."/>
            <person name="Madeira H.M.F."/>
            <person name="Marino C.L."/>
            <person name="Marques M.V."/>
            <person name="Martins E.A.L."/>
            <person name="Martins E.M.F."/>
            <person name="Matsukuma A.Y."/>
            <person name="Menck C.F.M."/>
            <person name="Miracca E.C."/>
            <person name="Miyaki C.Y."/>
            <person name="Monteiro-Vitorello C.B."/>
            <person name="Moon D.H."/>
            <person name="Nagai M.A."/>
            <person name="Nascimento A.L.T.O."/>
            <person name="Netto L.E.S."/>
            <person name="Nhani A. Jr."/>
            <person name="Nobrega F.G."/>
            <person name="Nunes L.R."/>
            <person name="Oliveira M.A."/>
            <person name="de Oliveira M.C."/>
            <person name="de Oliveira R.C."/>
            <person name="Palmieri D.A."/>
            <person name="Paris A."/>
            <person name="Peixoto B.R."/>
            <person name="Pereira G.A.G."/>
            <person name="Pereira H.A. Jr."/>
            <person name="Pesquero J.B."/>
            <person name="Quaggio R.B."/>
            <person name="Roberto P.G."/>
            <person name="Rodrigues V."/>
            <person name="de Rosa A.J.M."/>
            <person name="de Rosa V.E. Jr."/>
            <person name="de Sa R.G."/>
            <person name="Santelli R.V."/>
            <person name="Sawasaki H.E."/>
            <person name="da Silva A.C.R."/>
            <person name="da Silva A.M."/>
            <person name="da Silva F.R."/>
            <person name="Silva W.A. Jr."/>
            <person name="da Silveira J.F."/>
            <person name="Silvestri M.L.Z."/>
            <person name="Siqueira W.J."/>
            <person name="de Souza A.A."/>
            <person name="de Souza A.P."/>
            <person name="Terenzi M.F."/>
            <person name="Truffi D."/>
            <person name="Tsai S.M."/>
            <person name="Tsuhako M.H."/>
            <person name="Vallada H."/>
            <person name="Van Sluys M.A."/>
            <person name="Verjovski-Almeida S."/>
            <person name="Vettore A.L."/>
            <person name="Zago M.A."/>
            <person name="Zatz M."/>
            <person name="Meidanis J."/>
            <person name="Setubal J.C."/>
        </authorList>
    </citation>
    <scope>NUCLEOTIDE SEQUENCE [LARGE SCALE GENOMIC DNA]</scope>
    <source>
        <strain>9a5c</strain>
    </source>
</reference>
<protein>
    <recommendedName>
        <fullName evidence="1">Putative phosphoenolpyruvate synthase regulatory protein</fullName>
        <shortName evidence="1">PEP synthase regulatory protein</shortName>
        <shortName evidence="1">PSRP</shortName>
        <ecNumber evidence="1">2.7.11.33</ecNumber>
        <ecNumber evidence="1">2.7.4.28</ecNumber>
    </recommendedName>
    <alternativeName>
        <fullName evidence="1">Pyruvate, water dikinase regulatory protein</fullName>
    </alternativeName>
</protein>
<proteinExistence type="inferred from homology"/>
<comment type="function">
    <text evidence="1">Bifunctional serine/threonine kinase and phosphorylase involved in the regulation of the phosphoenolpyruvate synthase (PEPS) by catalyzing its phosphorylation/dephosphorylation.</text>
</comment>
<comment type="catalytic activity">
    <reaction evidence="1">
        <text>[pyruvate, water dikinase] + ADP = [pyruvate, water dikinase]-phosphate + AMP + H(+)</text>
        <dbReference type="Rhea" id="RHEA:46020"/>
        <dbReference type="Rhea" id="RHEA-COMP:11425"/>
        <dbReference type="Rhea" id="RHEA-COMP:11426"/>
        <dbReference type="ChEBI" id="CHEBI:15378"/>
        <dbReference type="ChEBI" id="CHEBI:43176"/>
        <dbReference type="ChEBI" id="CHEBI:68546"/>
        <dbReference type="ChEBI" id="CHEBI:456215"/>
        <dbReference type="ChEBI" id="CHEBI:456216"/>
        <dbReference type="EC" id="2.7.11.33"/>
    </reaction>
</comment>
<comment type="catalytic activity">
    <reaction evidence="1">
        <text>[pyruvate, water dikinase]-phosphate + phosphate + H(+) = [pyruvate, water dikinase] + diphosphate</text>
        <dbReference type="Rhea" id="RHEA:48580"/>
        <dbReference type="Rhea" id="RHEA-COMP:11425"/>
        <dbReference type="Rhea" id="RHEA-COMP:11426"/>
        <dbReference type="ChEBI" id="CHEBI:15378"/>
        <dbReference type="ChEBI" id="CHEBI:33019"/>
        <dbReference type="ChEBI" id="CHEBI:43176"/>
        <dbReference type="ChEBI" id="CHEBI:43474"/>
        <dbReference type="ChEBI" id="CHEBI:68546"/>
        <dbReference type="EC" id="2.7.4.28"/>
    </reaction>
</comment>
<comment type="similarity">
    <text evidence="1">Belongs to the pyruvate, phosphate/water dikinase regulatory protein family. PSRP subfamily.</text>
</comment>
<comment type="sequence caution" evidence="2">
    <conflict type="erroneous initiation">
        <sequence resource="EMBL-CDS" id="AAF84069"/>
    </conflict>
</comment>
<evidence type="ECO:0000255" key="1">
    <source>
        <dbReference type="HAMAP-Rule" id="MF_01062"/>
    </source>
</evidence>
<evidence type="ECO:0000305" key="2"/>
<keyword id="KW-0418">Kinase</keyword>
<keyword id="KW-0547">Nucleotide-binding</keyword>
<keyword id="KW-0723">Serine/threonine-protein kinase</keyword>
<keyword id="KW-0808">Transferase</keyword>
<accession>Q9PDW9</accession>
<feature type="chain" id="PRO_0000196747" description="Putative phosphoenolpyruvate synthase regulatory protein">
    <location>
        <begin position="1"/>
        <end position="273"/>
    </location>
</feature>
<feature type="binding site" evidence="1">
    <location>
        <begin position="153"/>
        <end position="160"/>
    </location>
    <ligand>
        <name>ADP</name>
        <dbReference type="ChEBI" id="CHEBI:456216"/>
    </ligand>
</feature>